<feature type="chain" id="PRO_0000371005" description="ATP synthase subunit delta">
    <location>
        <begin position="1"/>
        <end position="177"/>
    </location>
</feature>
<protein>
    <recommendedName>
        <fullName evidence="1">ATP synthase subunit delta</fullName>
    </recommendedName>
    <alternativeName>
        <fullName evidence="1">ATP synthase F(1) sector subunit delta</fullName>
    </alternativeName>
    <alternativeName>
        <fullName evidence="1">F-type ATPase subunit delta</fullName>
        <shortName evidence="1">F-ATPase subunit delta</shortName>
    </alternativeName>
</protein>
<proteinExistence type="inferred from homology"/>
<sequence>MSEFVTVARPYAKAAFDFAVEHNSVERWQDMLAFAAEVTKNDQMAELLSGALAPETLSEAFIAICGEQLDENGQNLIKVMAENNRLKVLPDVLEQFIHLRAASEAIAEVEVISANQLSDEQLARIVSAMEKRLSRKVKLNCKIDKSVMAGIIIRAGDMVIDGSVRGRLDRLADVLQS</sequence>
<keyword id="KW-0066">ATP synthesis</keyword>
<keyword id="KW-0997">Cell inner membrane</keyword>
<keyword id="KW-1003">Cell membrane</keyword>
<keyword id="KW-0139">CF(1)</keyword>
<keyword id="KW-0375">Hydrogen ion transport</keyword>
<keyword id="KW-0406">Ion transport</keyword>
<keyword id="KW-0472">Membrane</keyword>
<keyword id="KW-0813">Transport</keyword>
<gene>
    <name evidence="1" type="primary">atpH</name>
    <name type="ordered locus">KPK_5541</name>
</gene>
<evidence type="ECO:0000255" key="1">
    <source>
        <dbReference type="HAMAP-Rule" id="MF_01416"/>
    </source>
</evidence>
<reference key="1">
    <citation type="journal article" date="2008" name="PLoS Genet.">
        <title>Complete genome sequence of the N2-fixing broad host range endophyte Klebsiella pneumoniae 342 and virulence predictions verified in mice.</title>
        <authorList>
            <person name="Fouts D.E."/>
            <person name="Tyler H.L."/>
            <person name="DeBoy R.T."/>
            <person name="Daugherty S."/>
            <person name="Ren Q."/>
            <person name="Badger J.H."/>
            <person name="Durkin A.S."/>
            <person name="Huot H."/>
            <person name="Shrivastava S."/>
            <person name="Kothari S."/>
            <person name="Dodson R.J."/>
            <person name="Mohamoud Y."/>
            <person name="Khouri H."/>
            <person name="Roesch L.F.W."/>
            <person name="Krogfelt K.A."/>
            <person name="Struve C."/>
            <person name="Triplett E.W."/>
            <person name="Methe B.A."/>
        </authorList>
    </citation>
    <scope>NUCLEOTIDE SEQUENCE [LARGE SCALE GENOMIC DNA]</scope>
    <source>
        <strain>342</strain>
    </source>
</reference>
<name>ATPD_KLEP3</name>
<organism>
    <name type="scientific">Klebsiella pneumoniae (strain 342)</name>
    <dbReference type="NCBI Taxonomy" id="507522"/>
    <lineage>
        <taxon>Bacteria</taxon>
        <taxon>Pseudomonadati</taxon>
        <taxon>Pseudomonadota</taxon>
        <taxon>Gammaproteobacteria</taxon>
        <taxon>Enterobacterales</taxon>
        <taxon>Enterobacteriaceae</taxon>
        <taxon>Klebsiella/Raoultella group</taxon>
        <taxon>Klebsiella</taxon>
        <taxon>Klebsiella pneumoniae complex</taxon>
    </lineage>
</organism>
<comment type="function">
    <text evidence="1">F(1)F(0) ATP synthase produces ATP from ADP in the presence of a proton or sodium gradient. F-type ATPases consist of two structural domains, F(1) containing the extramembraneous catalytic core and F(0) containing the membrane proton channel, linked together by a central stalk and a peripheral stalk. During catalysis, ATP synthesis in the catalytic domain of F(1) is coupled via a rotary mechanism of the central stalk subunits to proton translocation.</text>
</comment>
<comment type="function">
    <text evidence="1">This protein is part of the stalk that links CF(0) to CF(1). It either transmits conformational changes from CF(0) to CF(1) or is implicated in proton conduction.</text>
</comment>
<comment type="subunit">
    <text evidence="1">F-type ATPases have 2 components, F(1) - the catalytic core - and F(0) - the membrane proton channel. F(1) has five subunits: alpha(3), beta(3), gamma(1), delta(1), epsilon(1). F(0) has three main subunits: a(1), b(2) and c(10-14). The alpha and beta chains form an alternating ring which encloses part of the gamma chain. F(1) is attached to F(0) by a central stalk formed by the gamma and epsilon chains, while a peripheral stalk is formed by the delta and b chains.</text>
</comment>
<comment type="subcellular location">
    <subcellularLocation>
        <location evidence="1">Cell inner membrane</location>
        <topology evidence="1">Peripheral membrane protein</topology>
    </subcellularLocation>
</comment>
<comment type="similarity">
    <text evidence="1">Belongs to the ATPase delta chain family.</text>
</comment>
<dbReference type="EMBL" id="CP000964">
    <property type="protein sequence ID" value="ACI11319.1"/>
    <property type="molecule type" value="Genomic_DNA"/>
</dbReference>
<dbReference type="SMR" id="B5XZM1"/>
<dbReference type="KEGG" id="kpe:KPK_5541"/>
<dbReference type="HOGENOM" id="CLU_085114_3_0_6"/>
<dbReference type="Proteomes" id="UP000001734">
    <property type="component" value="Chromosome"/>
</dbReference>
<dbReference type="GO" id="GO:0005886">
    <property type="term" value="C:plasma membrane"/>
    <property type="evidence" value="ECO:0007669"/>
    <property type="project" value="UniProtKB-SubCell"/>
</dbReference>
<dbReference type="GO" id="GO:0045259">
    <property type="term" value="C:proton-transporting ATP synthase complex"/>
    <property type="evidence" value="ECO:0007669"/>
    <property type="project" value="UniProtKB-KW"/>
</dbReference>
<dbReference type="GO" id="GO:0046933">
    <property type="term" value="F:proton-transporting ATP synthase activity, rotational mechanism"/>
    <property type="evidence" value="ECO:0007669"/>
    <property type="project" value="UniProtKB-UniRule"/>
</dbReference>
<dbReference type="FunFam" id="1.10.520.20:FF:000001">
    <property type="entry name" value="ATP synthase subunit delta"/>
    <property type="match status" value="1"/>
</dbReference>
<dbReference type="Gene3D" id="1.10.520.20">
    <property type="entry name" value="N-terminal domain of the delta subunit of the F1F0-ATP synthase"/>
    <property type="match status" value="1"/>
</dbReference>
<dbReference type="HAMAP" id="MF_01416">
    <property type="entry name" value="ATP_synth_delta_bact"/>
    <property type="match status" value="1"/>
</dbReference>
<dbReference type="InterPro" id="IPR026015">
    <property type="entry name" value="ATP_synth_OSCP/delta_N_sf"/>
</dbReference>
<dbReference type="InterPro" id="IPR020781">
    <property type="entry name" value="ATPase_OSCP/d_CS"/>
</dbReference>
<dbReference type="InterPro" id="IPR000711">
    <property type="entry name" value="ATPase_OSCP/dsu"/>
</dbReference>
<dbReference type="NCBIfam" id="TIGR01145">
    <property type="entry name" value="ATP_synt_delta"/>
    <property type="match status" value="1"/>
</dbReference>
<dbReference type="NCBIfam" id="NF004402">
    <property type="entry name" value="PRK05758.2-2"/>
    <property type="match status" value="1"/>
</dbReference>
<dbReference type="NCBIfam" id="NF004404">
    <property type="entry name" value="PRK05758.2-5"/>
    <property type="match status" value="1"/>
</dbReference>
<dbReference type="PANTHER" id="PTHR11910">
    <property type="entry name" value="ATP SYNTHASE DELTA CHAIN"/>
    <property type="match status" value="1"/>
</dbReference>
<dbReference type="Pfam" id="PF00213">
    <property type="entry name" value="OSCP"/>
    <property type="match status" value="1"/>
</dbReference>
<dbReference type="PRINTS" id="PR00125">
    <property type="entry name" value="ATPASEDELTA"/>
</dbReference>
<dbReference type="SUPFAM" id="SSF47928">
    <property type="entry name" value="N-terminal domain of the delta subunit of the F1F0-ATP synthase"/>
    <property type="match status" value="1"/>
</dbReference>
<dbReference type="PROSITE" id="PS00389">
    <property type="entry name" value="ATPASE_DELTA"/>
    <property type="match status" value="1"/>
</dbReference>
<accession>B5XZM1</accession>